<dbReference type="EMBL" id="AE001437">
    <property type="protein sequence ID" value="AAK78678.1"/>
    <property type="molecule type" value="Genomic_DNA"/>
</dbReference>
<dbReference type="PIR" id="C96986">
    <property type="entry name" value="C96986"/>
</dbReference>
<dbReference type="RefSeq" id="NP_347338.1">
    <property type="nucleotide sequence ID" value="NC_003030.1"/>
</dbReference>
<dbReference type="RefSeq" id="WP_010964020.1">
    <property type="nucleotide sequence ID" value="NC_003030.1"/>
</dbReference>
<dbReference type="SMR" id="Q97L61"/>
<dbReference type="STRING" id="272562.CA_C0701"/>
<dbReference type="KEGG" id="cac:CA_C0701"/>
<dbReference type="PATRIC" id="fig|272562.8.peg.904"/>
<dbReference type="eggNOG" id="COG1307">
    <property type="taxonomic scope" value="Bacteria"/>
</dbReference>
<dbReference type="HOGENOM" id="CLU_048251_0_1_9"/>
<dbReference type="OrthoDB" id="9780216at2"/>
<dbReference type="Proteomes" id="UP000000814">
    <property type="component" value="Chromosome"/>
</dbReference>
<dbReference type="GO" id="GO:0008289">
    <property type="term" value="F:lipid binding"/>
    <property type="evidence" value="ECO:0007669"/>
    <property type="project" value="UniProtKB-KW"/>
</dbReference>
<dbReference type="Gene3D" id="3.30.1180.10">
    <property type="match status" value="1"/>
</dbReference>
<dbReference type="Gene3D" id="3.40.50.10170">
    <property type="match status" value="1"/>
</dbReference>
<dbReference type="InterPro" id="IPR003797">
    <property type="entry name" value="DegV"/>
</dbReference>
<dbReference type="InterPro" id="IPR043168">
    <property type="entry name" value="DegV_C"/>
</dbReference>
<dbReference type="InterPro" id="IPR050270">
    <property type="entry name" value="DegV_domain_contain"/>
</dbReference>
<dbReference type="NCBIfam" id="TIGR00762">
    <property type="entry name" value="DegV"/>
    <property type="match status" value="1"/>
</dbReference>
<dbReference type="PANTHER" id="PTHR33434">
    <property type="entry name" value="DEGV DOMAIN-CONTAINING PROTEIN DR_1986-RELATED"/>
    <property type="match status" value="1"/>
</dbReference>
<dbReference type="PANTHER" id="PTHR33434:SF2">
    <property type="entry name" value="FATTY ACID-BINDING PROTEIN TM_1468"/>
    <property type="match status" value="1"/>
</dbReference>
<dbReference type="Pfam" id="PF02645">
    <property type="entry name" value="DegV"/>
    <property type="match status" value="1"/>
</dbReference>
<dbReference type="SUPFAM" id="SSF82549">
    <property type="entry name" value="DAK1/DegV-like"/>
    <property type="match status" value="1"/>
</dbReference>
<dbReference type="PROSITE" id="PS51482">
    <property type="entry name" value="DEGV"/>
    <property type="match status" value="1"/>
</dbReference>
<name>Y701_CLOAB</name>
<keyword id="KW-0446">Lipid-binding</keyword>
<keyword id="KW-1185">Reference proteome</keyword>
<evidence type="ECO:0000250" key="1"/>
<evidence type="ECO:0000250" key="2">
    <source>
        <dbReference type="UniProtKB" id="Q9X1H9"/>
    </source>
</evidence>
<evidence type="ECO:0000255" key="3">
    <source>
        <dbReference type="PROSITE-ProRule" id="PRU00815"/>
    </source>
</evidence>
<sequence>MEKIKIVTDSTCDLPEYIISKFDIEVLPLMVNVKGKSYFDIVDINFKQLSKIMDEENIFPTTSQVTPKRFNDCFAKYLKEGYKIICINMSSKMSGTYQSACIAKDMLESEDVVVIDSLNVTSGLGVLVLKACRLREEGKSFEEIKNEIIETIPHVKSALAFERLDNLIKGGRLSKTAGTIGNLLGIKLILEVKDGEMAIKDKVRGNKKAARVVLDCIKDESMNKEETTLLLNAENDDILPILRQKLIEQENKFIECEVGCVVGAHSGTKACGVFFIEKY</sequence>
<proteinExistence type="inferred from homology"/>
<gene>
    <name type="ordered locus">CA_C0701</name>
</gene>
<reference key="1">
    <citation type="journal article" date="2001" name="J. Bacteriol.">
        <title>Genome sequence and comparative analysis of the solvent-producing bacterium Clostridium acetobutylicum.</title>
        <authorList>
            <person name="Noelling J."/>
            <person name="Breton G."/>
            <person name="Omelchenko M.V."/>
            <person name="Makarova K.S."/>
            <person name="Zeng Q."/>
            <person name="Gibson R."/>
            <person name="Lee H.M."/>
            <person name="Dubois J."/>
            <person name="Qiu D."/>
            <person name="Hitti J."/>
            <person name="Wolf Y.I."/>
            <person name="Tatusov R.L."/>
            <person name="Sabathe F."/>
            <person name="Doucette-Stamm L.A."/>
            <person name="Soucaille P."/>
            <person name="Daly M.J."/>
            <person name="Bennett G.N."/>
            <person name="Koonin E.V."/>
            <person name="Smith D.R."/>
        </authorList>
    </citation>
    <scope>NUCLEOTIDE SEQUENCE [LARGE SCALE GENOMIC DNA]</scope>
    <source>
        <strain>ATCC 824 / DSM 792 / JCM 1419 / IAM 19013 / LMG 5710 / NBRC 13948 / NRRL B-527 / VKM B-1787 / 2291 / W</strain>
    </source>
</reference>
<accession>Q97L61</accession>
<comment type="function">
    <text evidence="1">May bind long-chain fatty acids, such as palmitate, and may play a role in lipid transport or fatty acid metabolism.</text>
</comment>
<feature type="chain" id="PRO_0000209753" description="DegV domain-containing protein CA_C0701">
    <location>
        <begin position="1"/>
        <end position="279"/>
    </location>
</feature>
<feature type="domain" description="DegV" evidence="3">
    <location>
        <begin position="4"/>
        <end position="277"/>
    </location>
</feature>
<feature type="binding site" evidence="2">
    <location>
        <position position="62"/>
    </location>
    <ligand>
        <name>hexadecanoate</name>
        <dbReference type="ChEBI" id="CHEBI:7896"/>
    </ligand>
</feature>
<feature type="binding site" evidence="2">
    <location>
        <position position="94"/>
    </location>
    <ligand>
        <name>hexadecanoate</name>
        <dbReference type="ChEBI" id="CHEBI:7896"/>
    </ligand>
</feature>
<organism>
    <name type="scientific">Clostridium acetobutylicum (strain ATCC 824 / DSM 792 / JCM 1419 / IAM 19013 / LMG 5710 / NBRC 13948 / NRRL B-527 / VKM B-1787 / 2291 / W)</name>
    <dbReference type="NCBI Taxonomy" id="272562"/>
    <lineage>
        <taxon>Bacteria</taxon>
        <taxon>Bacillati</taxon>
        <taxon>Bacillota</taxon>
        <taxon>Clostridia</taxon>
        <taxon>Eubacteriales</taxon>
        <taxon>Clostridiaceae</taxon>
        <taxon>Clostridium</taxon>
    </lineage>
</organism>
<protein>
    <recommendedName>
        <fullName>DegV domain-containing protein CA_C0701</fullName>
    </recommendedName>
</protein>